<sequence>MPRATLPAEARLHRPSEFAAALKGRRLARGAFFIVSASPCAPADDQPARARLGLVIAKRFAARAVTRNTLKRVIREAFRARRLALPAQDYVVRLHSKLTPASLTALKRSARAEVDAHFTRIAR</sequence>
<keyword id="KW-0255">Endonuclease</keyword>
<keyword id="KW-0378">Hydrolase</keyword>
<keyword id="KW-0540">Nuclease</keyword>
<keyword id="KW-0694">RNA-binding</keyword>
<keyword id="KW-0819">tRNA processing</keyword>
<dbReference type="EC" id="3.1.26.5" evidence="1"/>
<dbReference type="EMBL" id="BX640452">
    <property type="protein sequence ID" value="CAE35355.1"/>
    <property type="molecule type" value="Genomic_DNA"/>
</dbReference>
<dbReference type="RefSeq" id="WP_003816026.1">
    <property type="nucleotide sequence ID" value="NC_002927.3"/>
</dbReference>
<dbReference type="SMR" id="Q7WDJ7"/>
<dbReference type="KEGG" id="bbr:BB4991"/>
<dbReference type="eggNOG" id="COG0594">
    <property type="taxonomic scope" value="Bacteria"/>
</dbReference>
<dbReference type="HOGENOM" id="CLU_117179_11_1_4"/>
<dbReference type="Proteomes" id="UP000001027">
    <property type="component" value="Chromosome"/>
</dbReference>
<dbReference type="GO" id="GO:0030677">
    <property type="term" value="C:ribonuclease P complex"/>
    <property type="evidence" value="ECO:0007669"/>
    <property type="project" value="TreeGrafter"/>
</dbReference>
<dbReference type="GO" id="GO:0042781">
    <property type="term" value="F:3'-tRNA processing endoribonuclease activity"/>
    <property type="evidence" value="ECO:0007669"/>
    <property type="project" value="TreeGrafter"/>
</dbReference>
<dbReference type="GO" id="GO:0004526">
    <property type="term" value="F:ribonuclease P activity"/>
    <property type="evidence" value="ECO:0007669"/>
    <property type="project" value="UniProtKB-UniRule"/>
</dbReference>
<dbReference type="GO" id="GO:0000049">
    <property type="term" value="F:tRNA binding"/>
    <property type="evidence" value="ECO:0007669"/>
    <property type="project" value="UniProtKB-UniRule"/>
</dbReference>
<dbReference type="GO" id="GO:0001682">
    <property type="term" value="P:tRNA 5'-leader removal"/>
    <property type="evidence" value="ECO:0007669"/>
    <property type="project" value="UniProtKB-UniRule"/>
</dbReference>
<dbReference type="Gene3D" id="3.30.230.10">
    <property type="match status" value="1"/>
</dbReference>
<dbReference type="HAMAP" id="MF_00227">
    <property type="entry name" value="RNase_P"/>
    <property type="match status" value="1"/>
</dbReference>
<dbReference type="InterPro" id="IPR020568">
    <property type="entry name" value="Ribosomal_Su5_D2-typ_SF"/>
</dbReference>
<dbReference type="InterPro" id="IPR014721">
    <property type="entry name" value="Ribsml_uS5_D2-typ_fold_subgr"/>
</dbReference>
<dbReference type="InterPro" id="IPR000100">
    <property type="entry name" value="RNase_P"/>
</dbReference>
<dbReference type="InterPro" id="IPR020539">
    <property type="entry name" value="RNase_P_CS"/>
</dbReference>
<dbReference type="NCBIfam" id="NF000707">
    <property type="entry name" value="PRK00038.1"/>
    <property type="match status" value="1"/>
</dbReference>
<dbReference type="NCBIfam" id="TIGR00188">
    <property type="entry name" value="rnpA"/>
    <property type="match status" value="1"/>
</dbReference>
<dbReference type="PANTHER" id="PTHR33992">
    <property type="entry name" value="RIBONUCLEASE P PROTEIN COMPONENT"/>
    <property type="match status" value="1"/>
</dbReference>
<dbReference type="PANTHER" id="PTHR33992:SF1">
    <property type="entry name" value="RIBONUCLEASE P PROTEIN COMPONENT"/>
    <property type="match status" value="1"/>
</dbReference>
<dbReference type="Pfam" id="PF00825">
    <property type="entry name" value="Ribonuclease_P"/>
    <property type="match status" value="1"/>
</dbReference>
<dbReference type="SUPFAM" id="SSF54211">
    <property type="entry name" value="Ribosomal protein S5 domain 2-like"/>
    <property type="match status" value="1"/>
</dbReference>
<dbReference type="PROSITE" id="PS00648">
    <property type="entry name" value="RIBONUCLEASE_P"/>
    <property type="match status" value="1"/>
</dbReference>
<proteinExistence type="inferred from homology"/>
<feature type="chain" id="PRO_0000198428" description="Ribonuclease P protein component">
    <location>
        <begin position="1"/>
        <end position="123"/>
    </location>
</feature>
<organism>
    <name type="scientific">Bordetella bronchiseptica (strain ATCC BAA-588 / NCTC 13252 / RB50)</name>
    <name type="common">Alcaligenes bronchisepticus</name>
    <dbReference type="NCBI Taxonomy" id="257310"/>
    <lineage>
        <taxon>Bacteria</taxon>
        <taxon>Pseudomonadati</taxon>
        <taxon>Pseudomonadota</taxon>
        <taxon>Betaproteobacteria</taxon>
        <taxon>Burkholderiales</taxon>
        <taxon>Alcaligenaceae</taxon>
        <taxon>Bordetella</taxon>
    </lineage>
</organism>
<protein>
    <recommendedName>
        <fullName evidence="1">Ribonuclease P protein component</fullName>
        <shortName evidence="1">RNase P protein</shortName>
        <shortName evidence="1">RNaseP protein</shortName>
        <ecNumber evidence="1">3.1.26.5</ecNumber>
    </recommendedName>
    <alternativeName>
        <fullName evidence="1">Protein C5</fullName>
    </alternativeName>
</protein>
<accession>Q7WDJ7</accession>
<gene>
    <name evidence="1" type="primary">rnpA</name>
    <name type="ordered locus">BB4991</name>
</gene>
<reference key="1">
    <citation type="journal article" date="2003" name="Nat. Genet.">
        <title>Comparative analysis of the genome sequences of Bordetella pertussis, Bordetella parapertussis and Bordetella bronchiseptica.</title>
        <authorList>
            <person name="Parkhill J."/>
            <person name="Sebaihia M."/>
            <person name="Preston A."/>
            <person name="Murphy L.D."/>
            <person name="Thomson N.R."/>
            <person name="Harris D.E."/>
            <person name="Holden M.T.G."/>
            <person name="Churcher C.M."/>
            <person name="Bentley S.D."/>
            <person name="Mungall K.L."/>
            <person name="Cerdeno-Tarraga A.-M."/>
            <person name="Temple L."/>
            <person name="James K.D."/>
            <person name="Harris B."/>
            <person name="Quail M.A."/>
            <person name="Achtman M."/>
            <person name="Atkin R."/>
            <person name="Baker S."/>
            <person name="Basham D."/>
            <person name="Bason N."/>
            <person name="Cherevach I."/>
            <person name="Chillingworth T."/>
            <person name="Collins M."/>
            <person name="Cronin A."/>
            <person name="Davis P."/>
            <person name="Doggett J."/>
            <person name="Feltwell T."/>
            <person name="Goble A."/>
            <person name="Hamlin N."/>
            <person name="Hauser H."/>
            <person name="Holroyd S."/>
            <person name="Jagels K."/>
            <person name="Leather S."/>
            <person name="Moule S."/>
            <person name="Norberczak H."/>
            <person name="O'Neil S."/>
            <person name="Ormond D."/>
            <person name="Price C."/>
            <person name="Rabbinowitsch E."/>
            <person name="Rutter S."/>
            <person name="Sanders M."/>
            <person name="Saunders D."/>
            <person name="Seeger K."/>
            <person name="Sharp S."/>
            <person name="Simmonds M."/>
            <person name="Skelton J."/>
            <person name="Squares R."/>
            <person name="Squares S."/>
            <person name="Stevens K."/>
            <person name="Unwin L."/>
            <person name="Whitehead S."/>
            <person name="Barrell B.G."/>
            <person name="Maskell D.J."/>
        </authorList>
    </citation>
    <scope>NUCLEOTIDE SEQUENCE [LARGE SCALE GENOMIC DNA]</scope>
    <source>
        <strain>ATCC BAA-588 / NCTC 13252 / RB50</strain>
    </source>
</reference>
<name>RNPA_BORBR</name>
<comment type="function">
    <text evidence="1">RNaseP catalyzes the removal of the 5'-leader sequence from pre-tRNA to produce the mature 5'-terminus. It can also cleave other RNA substrates such as 4.5S RNA. The protein component plays an auxiliary but essential role in vivo by binding to the 5'-leader sequence and broadening the substrate specificity of the ribozyme.</text>
</comment>
<comment type="catalytic activity">
    <reaction evidence="1">
        <text>Endonucleolytic cleavage of RNA, removing 5'-extranucleotides from tRNA precursor.</text>
        <dbReference type="EC" id="3.1.26.5"/>
    </reaction>
</comment>
<comment type="subunit">
    <text evidence="1">Consists of a catalytic RNA component (M1 or rnpB) and a protein subunit.</text>
</comment>
<comment type="similarity">
    <text evidence="1">Belongs to the RnpA family.</text>
</comment>
<evidence type="ECO:0000255" key="1">
    <source>
        <dbReference type="HAMAP-Rule" id="MF_00227"/>
    </source>
</evidence>